<accession>Q723G3</accession>
<gene>
    <name type="primary">rpmF1</name>
    <name type="synonym">rpmF-1</name>
    <name type="ordered locus">LMOf2365_0516</name>
</gene>
<keyword id="KW-0687">Ribonucleoprotein</keyword>
<keyword id="KW-0689">Ribosomal protein</keyword>
<name>RL321_LISMF</name>
<feature type="chain" id="PRO_0000172358" description="Large ribosomal subunit protein bL32A">
    <location>
        <begin position="1"/>
        <end position="56"/>
    </location>
</feature>
<feature type="region of interest" description="Disordered" evidence="2">
    <location>
        <begin position="1"/>
        <end position="56"/>
    </location>
</feature>
<feature type="compositionally biased region" description="Basic residues" evidence="2">
    <location>
        <begin position="7"/>
        <end position="20"/>
    </location>
</feature>
<feature type="compositionally biased region" description="Basic and acidic residues" evidence="2">
    <location>
        <begin position="29"/>
        <end position="38"/>
    </location>
</feature>
<evidence type="ECO:0000255" key="1">
    <source>
        <dbReference type="HAMAP-Rule" id="MF_00340"/>
    </source>
</evidence>
<evidence type="ECO:0000256" key="2">
    <source>
        <dbReference type="SAM" id="MobiDB-lite"/>
    </source>
</evidence>
<evidence type="ECO:0000305" key="3"/>
<reference key="1">
    <citation type="journal article" date="2004" name="Nucleic Acids Res.">
        <title>Whole genome comparisons of serotype 4b and 1/2a strains of the food-borne pathogen Listeria monocytogenes reveal new insights into the core genome components of this species.</title>
        <authorList>
            <person name="Nelson K.E."/>
            <person name="Fouts D.E."/>
            <person name="Mongodin E.F."/>
            <person name="Ravel J."/>
            <person name="DeBoy R.T."/>
            <person name="Kolonay J.F."/>
            <person name="Rasko D.A."/>
            <person name="Angiuoli S.V."/>
            <person name="Gill S.R."/>
            <person name="Paulsen I.T."/>
            <person name="Peterson J.D."/>
            <person name="White O."/>
            <person name="Nelson W.C."/>
            <person name="Nierman W.C."/>
            <person name="Beanan M.J."/>
            <person name="Brinkac L.M."/>
            <person name="Daugherty S.C."/>
            <person name="Dodson R.J."/>
            <person name="Durkin A.S."/>
            <person name="Madupu R."/>
            <person name="Haft D.H."/>
            <person name="Selengut J."/>
            <person name="Van Aken S.E."/>
            <person name="Khouri H.M."/>
            <person name="Fedorova N."/>
            <person name="Forberger H.A."/>
            <person name="Tran B."/>
            <person name="Kathariou S."/>
            <person name="Wonderling L.D."/>
            <person name="Uhlich G.A."/>
            <person name="Bayles D.O."/>
            <person name="Luchansky J.B."/>
            <person name="Fraser C.M."/>
        </authorList>
    </citation>
    <scope>NUCLEOTIDE SEQUENCE [LARGE SCALE GENOMIC DNA]</scope>
    <source>
        <strain>F2365</strain>
    </source>
</reference>
<sequence>MAVPARRTSKAKKNKRRTHKGLTTPGLSRDSETGEYRMSHRISPDGTYKGRTIIEK</sequence>
<protein>
    <recommendedName>
        <fullName evidence="1">Large ribosomal subunit protein bL32A</fullName>
    </recommendedName>
    <alternativeName>
        <fullName evidence="3">50S ribosomal protein L32 1</fullName>
    </alternativeName>
</protein>
<organism>
    <name type="scientific">Listeria monocytogenes serotype 4b (strain F2365)</name>
    <dbReference type="NCBI Taxonomy" id="265669"/>
    <lineage>
        <taxon>Bacteria</taxon>
        <taxon>Bacillati</taxon>
        <taxon>Bacillota</taxon>
        <taxon>Bacilli</taxon>
        <taxon>Bacillales</taxon>
        <taxon>Listeriaceae</taxon>
        <taxon>Listeria</taxon>
    </lineage>
</organism>
<proteinExistence type="inferred from homology"/>
<comment type="similarity">
    <text evidence="3">Belongs to the bacterial ribosomal protein bL32 family.</text>
</comment>
<dbReference type="EMBL" id="AE017262">
    <property type="protein sequence ID" value="AAT03298.1"/>
    <property type="molecule type" value="Genomic_DNA"/>
</dbReference>
<dbReference type="SMR" id="Q723G3"/>
<dbReference type="KEGG" id="lmf:LMOf2365_0516"/>
<dbReference type="HOGENOM" id="CLU_129084_1_3_9"/>
<dbReference type="GO" id="GO:0015934">
    <property type="term" value="C:large ribosomal subunit"/>
    <property type="evidence" value="ECO:0007669"/>
    <property type="project" value="InterPro"/>
</dbReference>
<dbReference type="GO" id="GO:0003735">
    <property type="term" value="F:structural constituent of ribosome"/>
    <property type="evidence" value="ECO:0007669"/>
    <property type="project" value="InterPro"/>
</dbReference>
<dbReference type="GO" id="GO:0006412">
    <property type="term" value="P:translation"/>
    <property type="evidence" value="ECO:0007669"/>
    <property type="project" value="UniProtKB-UniRule"/>
</dbReference>
<dbReference type="HAMAP" id="MF_00340">
    <property type="entry name" value="Ribosomal_bL32"/>
    <property type="match status" value="1"/>
</dbReference>
<dbReference type="InterPro" id="IPR002677">
    <property type="entry name" value="Ribosomal_bL32"/>
</dbReference>
<dbReference type="InterPro" id="IPR044957">
    <property type="entry name" value="Ribosomal_bL32_bact"/>
</dbReference>
<dbReference type="InterPro" id="IPR011332">
    <property type="entry name" value="Ribosomal_zn-bd"/>
</dbReference>
<dbReference type="NCBIfam" id="TIGR01031">
    <property type="entry name" value="rpmF_bact"/>
    <property type="match status" value="1"/>
</dbReference>
<dbReference type="PANTHER" id="PTHR35534">
    <property type="entry name" value="50S RIBOSOMAL PROTEIN L32"/>
    <property type="match status" value="1"/>
</dbReference>
<dbReference type="PANTHER" id="PTHR35534:SF1">
    <property type="entry name" value="LARGE RIBOSOMAL SUBUNIT PROTEIN BL32"/>
    <property type="match status" value="1"/>
</dbReference>
<dbReference type="Pfam" id="PF01783">
    <property type="entry name" value="Ribosomal_L32p"/>
    <property type="match status" value="1"/>
</dbReference>
<dbReference type="SUPFAM" id="SSF57829">
    <property type="entry name" value="Zn-binding ribosomal proteins"/>
    <property type="match status" value="1"/>
</dbReference>